<gene>
    <name evidence="2" type="primary">infB</name>
    <name type="ordered locus">Anae109_1141</name>
</gene>
<organism>
    <name type="scientific">Anaeromyxobacter sp. (strain Fw109-5)</name>
    <dbReference type="NCBI Taxonomy" id="404589"/>
    <lineage>
        <taxon>Bacteria</taxon>
        <taxon>Pseudomonadati</taxon>
        <taxon>Myxococcota</taxon>
        <taxon>Myxococcia</taxon>
        <taxon>Myxococcales</taxon>
        <taxon>Cystobacterineae</taxon>
        <taxon>Anaeromyxobacteraceae</taxon>
        <taxon>Anaeromyxobacter</taxon>
    </lineage>
</organism>
<dbReference type="EMBL" id="CP000769">
    <property type="protein sequence ID" value="ABS25349.1"/>
    <property type="molecule type" value="Genomic_DNA"/>
</dbReference>
<dbReference type="RefSeq" id="WP_011985455.1">
    <property type="nucleotide sequence ID" value="NC_009675.1"/>
</dbReference>
<dbReference type="SMR" id="A7H9F3"/>
<dbReference type="STRING" id="404589.Anae109_1141"/>
<dbReference type="KEGG" id="afw:Anae109_1141"/>
<dbReference type="eggNOG" id="COG0532">
    <property type="taxonomic scope" value="Bacteria"/>
</dbReference>
<dbReference type="HOGENOM" id="CLU_006301_9_3_7"/>
<dbReference type="OrthoDB" id="9811804at2"/>
<dbReference type="Proteomes" id="UP000006382">
    <property type="component" value="Chromosome"/>
</dbReference>
<dbReference type="GO" id="GO:0005829">
    <property type="term" value="C:cytosol"/>
    <property type="evidence" value="ECO:0007669"/>
    <property type="project" value="TreeGrafter"/>
</dbReference>
<dbReference type="GO" id="GO:0005525">
    <property type="term" value="F:GTP binding"/>
    <property type="evidence" value="ECO:0007669"/>
    <property type="project" value="UniProtKB-KW"/>
</dbReference>
<dbReference type="GO" id="GO:0003924">
    <property type="term" value="F:GTPase activity"/>
    <property type="evidence" value="ECO:0007669"/>
    <property type="project" value="UniProtKB-UniRule"/>
</dbReference>
<dbReference type="GO" id="GO:0003743">
    <property type="term" value="F:translation initiation factor activity"/>
    <property type="evidence" value="ECO:0007669"/>
    <property type="project" value="UniProtKB-UniRule"/>
</dbReference>
<dbReference type="CDD" id="cd01887">
    <property type="entry name" value="IF2_eIF5B"/>
    <property type="match status" value="1"/>
</dbReference>
<dbReference type="CDD" id="cd03702">
    <property type="entry name" value="IF2_mtIF2_II"/>
    <property type="match status" value="1"/>
</dbReference>
<dbReference type="CDD" id="cd03692">
    <property type="entry name" value="mtIF2_IVc"/>
    <property type="match status" value="1"/>
</dbReference>
<dbReference type="FunFam" id="2.40.30.10:FF:000007">
    <property type="entry name" value="Translation initiation factor IF-2"/>
    <property type="match status" value="1"/>
</dbReference>
<dbReference type="FunFam" id="2.40.30.10:FF:000008">
    <property type="entry name" value="Translation initiation factor IF-2"/>
    <property type="match status" value="1"/>
</dbReference>
<dbReference type="FunFam" id="3.40.50.10050:FF:000001">
    <property type="entry name" value="Translation initiation factor IF-2"/>
    <property type="match status" value="1"/>
</dbReference>
<dbReference type="FunFam" id="3.40.50.300:FF:000019">
    <property type="entry name" value="Translation initiation factor IF-2"/>
    <property type="match status" value="1"/>
</dbReference>
<dbReference type="Gene3D" id="1.10.10.2480">
    <property type="match status" value="1"/>
</dbReference>
<dbReference type="Gene3D" id="3.40.50.300">
    <property type="entry name" value="P-loop containing nucleotide triphosphate hydrolases"/>
    <property type="match status" value="1"/>
</dbReference>
<dbReference type="Gene3D" id="2.40.30.10">
    <property type="entry name" value="Translation factors"/>
    <property type="match status" value="2"/>
</dbReference>
<dbReference type="Gene3D" id="3.40.50.10050">
    <property type="entry name" value="Translation initiation factor IF- 2, domain 3"/>
    <property type="match status" value="1"/>
</dbReference>
<dbReference type="HAMAP" id="MF_00100_B">
    <property type="entry name" value="IF_2_B"/>
    <property type="match status" value="1"/>
</dbReference>
<dbReference type="InterPro" id="IPR053905">
    <property type="entry name" value="EF-G-like_DII"/>
</dbReference>
<dbReference type="InterPro" id="IPR044145">
    <property type="entry name" value="IF2_II"/>
</dbReference>
<dbReference type="InterPro" id="IPR006847">
    <property type="entry name" value="IF2_N"/>
</dbReference>
<dbReference type="InterPro" id="IPR027417">
    <property type="entry name" value="P-loop_NTPase"/>
</dbReference>
<dbReference type="InterPro" id="IPR005225">
    <property type="entry name" value="Small_GTP-bd"/>
</dbReference>
<dbReference type="InterPro" id="IPR000795">
    <property type="entry name" value="T_Tr_GTP-bd_dom"/>
</dbReference>
<dbReference type="InterPro" id="IPR000178">
    <property type="entry name" value="TF_IF2_bacterial-like"/>
</dbReference>
<dbReference type="InterPro" id="IPR015760">
    <property type="entry name" value="TIF_IF2"/>
</dbReference>
<dbReference type="InterPro" id="IPR023115">
    <property type="entry name" value="TIF_IF2_dom3"/>
</dbReference>
<dbReference type="InterPro" id="IPR036925">
    <property type="entry name" value="TIF_IF2_dom3_sf"/>
</dbReference>
<dbReference type="InterPro" id="IPR009000">
    <property type="entry name" value="Transl_B-barrel_sf"/>
</dbReference>
<dbReference type="NCBIfam" id="TIGR00487">
    <property type="entry name" value="IF-2"/>
    <property type="match status" value="1"/>
</dbReference>
<dbReference type="NCBIfam" id="TIGR00231">
    <property type="entry name" value="small_GTP"/>
    <property type="match status" value="1"/>
</dbReference>
<dbReference type="PANTHER" id="PTHR43381:SF5">
    <property type="entry name" value="TR-TYPE G DOMAIN-CONTAINING PROTEIN"/>
    <property type="match status" value="1"/>
</dbReference>
<dbReference type="PANTHER" id="PTHR43381">
    <property type="entry name" value="TRANSLATION INITIATION FACTOR IF-2-RELATED"/>
    <property type="match status" value="1"/>
</dbReference>
<dbReference type="Pfam" id="PF22042">
    <property type="entry name" value="EF-G_D2"/>
    <property type="match status" value="1"/>
</dbReference>
<dbReference type="Pfam" id="PF00009">
    <property type="entry name" value="GTP_EFTU"/>
    <property type="match status" value="1"/>
</dbReference>
<dbReference type="Pfam" id="PF11987">
    <property type="entry name" value="IF-2"/>
    <property type="match status" value="1"/>
</dbReference>
<dbReference type="Pfam" id="PF04760">
    <property type="entry name" value="IF2_N"/>
    <property type="match status" value="2"/>
</dbReference>
<dbReference type="SUPFAM" id="SSF52156">
    <property type="entry name" value="Initiation factor IF2/eIF5b, domain 3"/>
    <property type="match status" value="1"/>
</dbReference>
<dbReference type="SUPFAM" id="SSF52540">
    <property type="entry name" value="P-loop containing nucleoside triphosphate hydrolases"/>
    <property type="match status" value="1"/>
</dbReference>
<dbReference type="SUPFAM" id="SSF50447">
    <property type="entry name" value="Translation proteins"/>
    <property type="match status" value="2"/>
</dbReference>
<dbReference type="PROSITE" id="PS51722">
    <property type="entry name" value="G_TR_2"/>
    <property type="match status" value="1"/>
</dbReference>
<dbReference type="PROSITE" id="PS01176">
    <property type="entry name" value="IF2"/>
    <property type="match status" value="1"/>
</dbReference>
<evidence type="ECO:0000250" key="1"/>
<evidence type="ECO:0000255" key="2">
    <source>
        <dbReference type="HAMAP-Rule" id="MF_00100"/>
    </source>
</evidence>
<evidence type="ECO:0000256" key="3">
    <source>
        <dbReference type="SAM" id="MobiDB-lite"/>
    </source>
</evidence>
<protein>
    <recommendedName>
        <fullName evidence="2">Translation initiation factor IF-2</fullName>
    </recommendedName>
</protein>
<proteinExistence type="inferred from homology"/>
<comment type="function">
    <text evidence="2">One of the essential components for the initiation of protein synthesis. Protects formylmethionyl-tRNA from spontaneous hydrolysis and promotes its binding to the 30S ribosomal subunits. Also involved in the hydrolysis of GTP during the formation of the 70S ribosomal complex.</text>
</comment>
<comment type="subcellular location">
    <subcellularLocation>
        <location evidence="2">Cytoplasm</location>
    </subcellularLocation>
</comment>
<comment type="similarity">
    <text evidence="2">Belongs to the TRAFAC class translation factor GTPase superfamily. Classic translation factor GTPase family. IF-2 subfamily.</text>
</comment>
<keyword id="KW-0963">Cytoplasm</keyword>
<keyword id="KW-0342">GTP-binding</keyword>
<keyword id="KW-0396">Initiation factor</keyword>
<keyword id="KW-0547">Nucleotide-binding</keyword>
<keyword id="KW-0648">Protein biosynthesis</keyword>
<keyword id="KW-1185">Reference proteome</keyword>
<accession>A7H9F3</accession>
<reference key="1">
    <citation type="journal article" date="2015" name="Genome Announc.">
        <title>Complete genome sequence of Anaeromyxobacter sp. Fw109-5, an anaerobic, metal-reducing bacterium isolated from a contaminated subsurface environment.</title>
        <authorList>
            <person name="Hwang C."/>
            <person name="Copeland A."/>
            <person name="Lucas S."/>
            <person name="Lapidus A."/>
            <person name="Barry K."/>
            <person name="Glavina Del Rio T."/>
            <person name="Dalin E."/>
            <person name="Tice H."/>
            <person name="Pitluck S."/>
            <person name="Sims D."/>
            <person name="Brettin T."/>
            <person name="Bruce D.C."/>
            <person name="Detter J.C."/>
            <person name="Han C.S."/>
            <person name="Schmutz J."/>
            <person name="Larimer F.W."/>
            <person name="Land M.L."/>
            <person name="Hauser L.J."/>
            <person name="Kyrpides N."/>
            <person name="Lykidis A."/>
            <person name="Richardson P."/>
            <person name="Belieav A."/>
            <person name="Sanford R.A."/>
            <person name="Loeffler F.E."/>
            <person name="Fields M.W."/>
        </authorList>
    </citation>
    <scope>NUCLEOTIDE SEQUENCE [LARGE SCALE GENOMIC DNA]</scope>
    <source>
        <strain>Fw109-5</strain>
    </source>
</reference>
<sequence>MSKKRVHELGKQLKEQGIELSNQELVEKLLHLGYDVKSHSSSLEDDQAHAAYEKILAERKPKAAPARPSGPGFVVRKRAHVEPPPVQEAQPVEAQPSYEEQPSYEEQPSYEEQPSLEEPAEVAAEAAPEPVEEPASSPEGGAPAGGAEPQPAPEAPPPSAAPAMPAAPSAPPSPAVRPPAPSVPAGAQPPGAPVRPAAPGVRPAAPGVRPAAPGVRPTGPGVRPSVPGGPRAPGQPTAPMAAAPHGPGAQPGQPAAPGPDPRTLRPTATQAVVISRPLVPVRRVTPPTGARTQFPAAPGPRALGEVRELKVVPGSLGREREFIDVSRDKRRGRTPGRPMSEEQAKSLSGKELLQAAITDRAYIPIRGKKKKPTKKGAKTQITEKAEHKKVIRVEESISVSELSQAMGVKASDLIRKLMQAGTMATINQQIDADTAAFLATEFGYTLEKKGFEVEEYIPEVEVDESKLVIRPPVVTVMGHVDHGKTSLLDAIRQADVAAGEAGGITQHIGAYAVQTPQGPITFLDTPGHEAFTAMRQRGAQVTDLVVLVVAADDGVMPQTVESIKAAKAAGVTILVAINKIDKPGATPERVMQQLTEYELVAEQWGGSTIMLPVSARTKQGIPELLEYIALQSEVLELKANPEMLASGRVIEAKLEKGRGPVATVLVEEGTLRVGDALVTGIHYGRVRAMMNERGEQVKEVPPGYPVEVLGLSGVPVAGDEFDVVQDEKAAKEVAEHRAEKQRKKELGASRKATLEDLFAKAKSGGGKVLNVVVKADVQGSSEAVTQALQKAATKKVGVKILDSGVGAITKSDVLTAAAGNGIIVGFNTKPESEIESIASQQGVKILLFDIIYEAVDKIREEMAGLLEPIIREKPLGKAEVRALFSIPKLGNIAGSAVTEGVIKRAANVRVLRDRKVVYSGKIGSLKRLKDDVREVQTGFECGIGIEGFSDVKPGDVIEAYELEEIRQSLD</sequence>
<name>IF2_ANADF</name>
<feature type="chain" id="PRO_1000008196" description="Translation initiation factor IF-2">
    <location>
        <begin position="1"/>
        <end position="970"/>
    </location>
</feature>
<feature type="domain" description="tr-type G">
    <location>
        <begin position="469"/>
        <end position="638"/>
    </location>
</feature>
<feature type="region of interest" description="Disordered" evidence="3">
    <location>
        <begin position="54"/>
        <end position="270"/>
    </location>
</feature>
<feature type="region of interest" description="Disordered" evidence="3">
    <location>
        <begin position="328"/>
        <end position="348"/>
    </location>
</feature>
<feature type="region of interest" description="G1" evidence="1">
    <location>
        <begin position="478"/>
        <end position="485"/>
    </location>
</feature>
<feature type="region of interest" description="G2" evidence="1">
    <location>
        <begin position="503"/>
        <end position="507"/>
    </location>
</feature>
<feature type="region of interest" description="G3" evidence="1">
    <location>
        <begin position="524"/>
        <end position="527"/>
    </location>
</feature>
<feature type="region of interest" description="G4" evidence="1">
    <location>
        <begin position="578"/>
        <end position="581"/>
    </location>
</feature>
<feature type="region of interest" description="G5" evidence="1">
    <location>
        <begin position="614"/>
        <end position="616"/>
    </location>
</feature>
<feature type="compositionally biased region" description="Low complexity" evidence="3">
    <location>
        <begin position="87"/>
        <end position="96"/>
    </location>
</feature>
<feature type="compositionally biased region" description="Polar residues" evidence="3">
    <location>
        <begin position="98"/>
        <end position="112"/>
    </location>
</feature>
<feature type="compositionally biased region" description="Low complexity" evidence="3">
    <location>
        <begin position="121"/>
        <end position="149"/>
    </location>
</feature>
<feature type="compositionally biased region" description="Pro residues" evidence="3">
    <location>
        <begin position="150"/>
        <end position="160"/>
    </location>
</feature>
<feature type="compositionally biased region" description="Pro residues" evidence="3">
    <location>
        <begin position="168"/>
        <end position="182"/>
    </location>
</feature>
<feature type="compositionally biased region" description="Low complexity" evidence="3">
    <location>
        <begin position="183"/>
        <end position="253"/>
    </location>
</feature>
<feature type="binding site" evidence="2">
    <location>
        <begin position="478"/>
        <end position="485"/>
    </location>
    <ligand>
        <name>GTP</name>
        <dbReference type="ChEBI" id="CHEBI:37565"/>
    </ligand>
</feature>
<feature type="binding site" evidence="2">
    <location>
        <begin position="524"/>
        <end position="528"/>
    </location>
    <ligand>
        <name>GTP</name>
        <dbReference type="ChEBI" id="CHEBI:37565"/>
    </ligand>
</feature>
<feature type="binding site" evidence="2">
    <location>
        <begin position="578"/>
        <end position="581"/>
    </location>
    <ligand>
        <name>GTP</name>
        <dbReference type="ChEBI" id="CHEBI:37565"/>
    </ligand>
</feature>